<gene>
    <name type="primary">MSP-2</name>
</gene>
<evidence type="ECO:0000250" key="1"/>
<evidence type="ECO:0000255" key="2">
    <source>
        <dbReference type="PROSITE-ProRule" id="PRU00132"/>
    </source>
</evidence>
<reference key="1">
    <citation type="submission" date="1993-11" db="EMBL/GenBank/DDBJ databases">
        <authorList>
            <person name="Novitski C.E."/>
            <person name="Brown S."/>
            <person name="Chen R."/>
            <person name="Corner A.S."/>
            <person name="Atkinson H.J."/>
            <person name="McPherson M.J."/>
        </authorList>
    </citation>
    <scope>NUCLEOTIDE SEQUENCE [GENOMIC DNA]</scope>
    <source>
        <strain>Ro1 / Mierenbos</strain>
    </source>
</reference>
<protein>
    <recommendedName>
        <fullName>Major sperm protein 2</fullName>
    </recommendedName>
</protein>
<accession>P53022</accession>
<feature type="initiator methionine" description="Removed" evidence="1">
    <location>
        <position position="1"/>
    </location>
</feature>
<feature type="chain" id="PRO_0000213455" description="Major sperm protein 2">
    <location>
        <begin position="2"/>
        <end position="126"/>
    </location>
</feature>
<feature type="domain" description="MSP" evidence="2">
    <location>
        <begin position="8"/>
        <end position="125"/>
    </location>
</feature>
<feature type="modified residue" description="N-acetylalanine" evidence="1">
    <location>
        <position position="2"/>
    </location>
</feature>
<comment type="function">
    <text evidence="1">Central component in molecular interactions underlying sperm crawling. Forms an extensive filament system that extends from sperm villipoda, along the leading edge of the pseudopod (By similarity).</text>
</comment>
<comment type="subcellular location">
    <subcellularLocation>
        <location evidence="1">Cell projection</location>
        <location evidence="1">Pseudopodium</location>
    </subcellularLocation>
    <subcellularLocation>
        <location evidence="1">Cytoplasm</location>
        <location evidence="1">Cytoskeleton</location>
    </subcellularLocation>
</comment>
<comment type="tissue specificity">
    <text>Sperm.</text>
</comment>
<dbReference type="EMBL" id="L24500">
    <property type="protein sequence ID" value="AAA29147.1"/>
    <property type="molecule type" value="Genomic_DNA"/>
</dbReference>
<dbReference type="SMR" id="P53022"/>
<dbReference type="Proteomes" id="UP000887572">
    <property type="component" value="Unplaced"/>
</dbReference>
<dbReference type="GO" id="GO:0005737">
    <property type="term" value="C:cytoplasm"/>
    <property type="evidence" value="ECO:0007669"/>
    <property type="project" value="UniProtKB-KW"/>
</dbReference>
<dbReference type="GO" id="GO:0005856">
    <property type="term" value="C:cytoskeleton"/>
    <property type="evidence" value="ECO:0007669"/>
    <property type="project" value="UniProtKB-SubCell"/>
</dbReference>
<dbReference type="GO" id="GO:0031143">
    <property type="term" value="C:pseudopodium"/>
    <property type="evidence" value="ECO:0007669"/>
    <property type="project" value="UniProtKB-SubCell"/>
</dbReference>
<dbReference type="Gene3D" id="2.60.40.10">
    <property type="entry name" value="Immunoglobulins"/>
    <property type="match status" value="1"/>
</dbReference>
<dbReference type="InterPro" id="IPR013783">
    <property type="entry name" value="Ig-like_fold"/>
</dbReference>
<dbReference type="InterPro" id="IPR000535">
    <property type="entry name" value="MSP_dom"/>
</dbReference>
<dbReference type="InterPro" id="IPR051155">
    <property type="entry name" value="Nematode_MSP"/>
</dbReference>
<dbReference type="InterPro" id="IPR008962">
    <property type="entry name" value="PapD-like_sf"/>
</dbReference>
<dbReference type="PANTHER" id="PTHR22920">
    <property type="entry name" value="MAJOR SPERM PROTEIN"/>
    <property type="match status" value="1"/>
</dbReference>
<dbReference type="PANTHER" id="PTHR22920:SF7">
    <property type="entry name" value="MSP DOMAIN-CONTAINING PROTEIN-RELATED"/>
    <property type="match status" value="1"/>
</dbReference>
<dbReference type="Pfam" id="PF00635">
    <property type="entry name" value="Motile_Sperm"/>
    <property type="match status" value="1"/>
</dbReference>
<dbReference type="SUPFAM" id="SSF49354">
    <property type="entry name" value="PapD-like"/>
    <property type="match status" value="1"/>
</dbReference>
<dbReference type="PROSITE" id="PS50202">
    <property type="entry name" value="MSP"/>
    <property type="match status" value="1"/>
</dbReference>
<proteinExistence type="evidence at transcript level"/>
<organism>
    <name type="scientific">Globodera rostochiensis</name>
    <name type="common">Golden nematode worm</name>
    <name type="synonym">Heterodera rostochiensis</name>
    <dbReference type="NCBI Taxonomy" id="31243"/>
    <lineage>
        <taxon>Eukaryota</taxon>
        <taxon>Metazoa</taxon>
        <taxon>Ecdysozoa</taxon>
        <taxon>Nematoda</taxon>
        <taxon>Chromadorea</taxon>
        <taxon>Rhabditida</taxon>
        <taxon>Tylenchina</taxon>
        <taxon>Tylenchomorpha</taxon>
        <taxon>Tylenchoidea</taxon>
        <taxon>Heteroderidae</taxon>
        <taxon>Heteroderinae</taxon>
        <taxon>Globodera</taxon>
    </lineage>
</organism>
<name>MSP2_GLORO</name>
<keyword id="KW-0007">Acetylation</keyword>
<keyword id="KW-0966">Cell projection</keyword>
<keyword id="KW-0963">Cytoplasm</keyword>
<keyword id="KW-0206">Cytoskeleton</keyword>
<keyword id="KW-1185">Reference proteome</keyword>
<sequence length="126" mass="13932">MAQLPPGDIATMPNQKVVFNAPFDNKATYYVRVINPGTNRIGFAFKTTKPKRINMNPPNGVLGPKESVNVAISCDAFDPSSEDTKGDRVTVEWCNTPDPAAAAFKLEWFQGDGMVRRKNLPIEYNV</sequence>